<comment type="function">
    <text>Probably involved in TTQ prosthetic group biosynthesis.</text>
</comment>
<comment type="pathway">
    <text>One-carbon metabolism; methylamine degradation.</text>
</comment>
<comment type="sequence caution" evidence="1">
    <conflict type="erroneous initiation">
        <sequence resource="EMBL-CDS" id="ABE48823"/>
    </conflict>
</comment>
<feature type="chain" id="PRO_0000208946" description="Methylamine utilization protein MauL">
    <location>
        <begin position="1"/>
        <end position="157"/>
    </location>
</feature>
<accession>Q50422</accession>
<accession>Q1H3W4</accession>
<gene>
    <name type="primary">mauL</name>
    <name type="ordered locus">Mfla_0553</name>
</gene>
<reference key="1">
    <citation type="journal article" date="1995" name="J. Bacteriol.">
        <title>Cloning, sequencing, and mutation of a gene for azurin in Methylobacillus flagellatum KT.</title>
        <authorList>
            <person name="Gak E.R."/>
            <person name="Chistoserdov A.Y."/>
            <person name="Lidstrom M.E."/>
        </authorList>
    </citation>
    <scope>NUCLEOTIDE SEQUENCE [GENOMIC DNA]</scope>
</reference>
<reference key="2">
    <citation type="submission" date="2006-03" db="EMBL/GenBank/DDBJ databases">
        <title>Complete sequence of Methylobacillus flagellatus KT.</title>
        <authorList>
            <consortium name="US DOE Joint Genome Institute"/>
            <person name="Copeland A."/>
            <person name="Lucas S."/>
            <person name="Lapidus A."/>
            <person name="Barry K."/>
            <person name="Detter J.C."/>
            <person name="Glavina del Rio T."/>
            <person name="Hammon N."/>
            <person name="Israni S."/>
            <person name="Dalin E."/>
            <person name="Tice H."/>
            <person name="Pitluck S."/>
            <person name="Brettin T."/>
            <person name="Bruce D."/>
            <person name="Han C."/>
            <person name="Tapia R."/>
            <person name="Saunders E."/>
            <person name="Gilna P."/>
            <person name="Schmutz J."/>
            <person name="Larimer F."/>
            <person name="Land M."/>
            <person name="Kyrpides N."/>
            <person name="Anderson I."/>
            <person name="Richardson P."/>
        </authorList>
    </citation>
    <scope>NUCLEOTIDE SEQUENCE [LARGE SCALE GENOMIC DNA]</scope>
    <source>
        <strain>ATCC 51484 / DSM 6875 / VKM B-1610 / KT</strain>
    </source>
</reference>
<sequence>MLRNRTDAVHDRVRFSIGTRVMSSWSIVVWMFHRQTWQFLLTTGFILCISSIAWSAEVHQMELTHHEFEPWSFVPKPGDRIDIHNHSDIVHAIYVTYPNGIVVNLSETAAQLPGMTVSWTVPEDAEDGDEYVLQCWIHTIIRAALKVKAPLSQLPEP</sequence>
<organism>
    <name type="scientific">Methylobacillus flagellatus (strain ATCC 51484 / DSM 6875 / VKM B-1610 / KT)</name>
    <dbReference type="NCBI Taxonomy" id="265072"/>
    <lineage>
        <taxon>Bacteria</taxon>
        <taxon>Pseudomonadati</taxon>
        <taxon>Pseudomonadota</taxon>
        <taxon>Betaproteobacteria</taxon>
        <taxon>Nitrosomonadales</taxon>
        <taxon>Methylophilaceae</taxon>
        <taxon>Methylobacillus</taxon>
    </lineage>
</organism>
<proteinExistence type="predicted"/>
<evidence type="ECO:0000305" key="1"/>
<keyword id="KW-1185">Reference proteome</keyword>
<protein>
    <recommendedName>
        <fullName>Methylamine utilization protein MauL</fullName>
    </recommendedName>
</protein>
<dbReference type="EMBL" id="L37429">
    <property type="protein sequence ID" value="AAC41471.1"/>
    <property type="molecule type" value="Genomic_DNA"/>
</dbReference>
<dbReference type="EMBL" id="CP000284">
    <property type="protein sequence ID" value="ABE48823.1"/>
    <property type="status" value="ALT_INIT"/>
    <property type="molecule type" value="Genomic_DNA"/>
</dbReference>
<dbReference type="SMR" id="Q50422"/>
<dbReference type="STRING" id="265072.Mfla_0553"/>
<dbReference type="KEGG" id="mfa:Mfla_0553"/>
<dbReference type="eggNOG" id="ENOG503456X">
    <property type="taxonomic scope" value="Bacteria"/>
</dbReference>
<dbReference type="HOGENOM" id="CLU_1667333_0_0_4"/>
<dbReference type="OrthoDB" id="9757546at2"/>
<dbReference type="UniPathway" id="UPA00895"/>
<dbReference type="Proteomes" id="UP000002440">
    <property type="component" value="Chromosome"/>
</dbReference>
<dbReference type="CDD" id="cd04221">
    <property type="entry name" value="MauL"/>
    <property type="match status" value="1"/>
</dbReference>
<dbReference type="InterPro" id="IPR008972">
    <property type="entry name" value="Cupredoxin"/>
</dbReference>
<dbReference type="InterPro" id="IPR034242">
    <property type="entry name" value="MauL"/>
</dbReference>
<dbReference type="SUPFAM" id="SSF49503">
    <property type="entry name" value="Cupredoxins"/>
    <property type="match status" value="1"/>
</dbReference>
<name>MAUL_METFK</name>